<sequence>MSILLPNMAEFDTISELEEEEEAATSSSSPSSSPSSSSSSSVSGPDEDEEDEEEEEEEDEEEEDEEEEEEEVPPPPRVVSEEHLRRYAPDPVLVRGAGHITVFGLSNKFDTEFPSVLTGKVAPEEFKTSIGRVNSCLKKALPVNVKWLLCGCLCCCCTLGCSLWPVICLNKRTRRSIQKLLEWENNRLYHKLALHWKLTKRKCETSNMMEYVILIEFLPKYPIFRPD</sequence>
<reference key="1">
    <citation type="journal article" date="1997" name="Mamm. Genome">
        <title>Localization and expression analysis of a novel conserved brain expressed transcript, Brx/BRX, lying within the Xic/XIC candidate region.</title>
        <authorList>
            <person name="Simmler M.-C."/>
            <person name="Heard E."/>
            <person name="Rougeulle C."/>
            <person name="Cruaud C."/>
            <person name="Weissenbach J."/>
            <person name="Avner P."/>
        </authorList>
    </citation>
    <scope>NUCLEOTIDE SEQUENCE [MRNA]</scope>
    <scope>TISSUE SPECIFICITY</scope>
    <scope>DEVELOPMENTAL STAGE</scope>
    <source>
        <strain>BALB/cJ</strain>
        <tissue>Brain</tissue>
    </source>
</reference>
<reference key="2">
    <citation type="journal article" date="2002" name="Genome Res.">
        <title>Comparative sequence analysis of the X-inactivation center region in mouse, human and bovine.</title>
        <authorList>
            <person name="Chureau C."/>
            <person name="Prissette M."/>
            <person name="Bourdet A."/>
            <person name="Barbe V."/>
            <person name="Cattolico L."/>
            <person name="Jones L."/>
            <person name="Eggen A."/>
            <person name="Avner P."/>
            <person name="Duret L."/>
        </authorList>
    </citation>
    <scope>NUCLEOTIDE SEQUENCE [GENOMIC DNA]</scope>
    <source>
        <strain>129/Sv</strain>
    </source>
</reference>
<reference key="3">
    <citation type="journal article" date="2005" name="Science">
        <title>The transcriptional landscape of the mammalian genome.</title>
        <authorList>
            <person name="Carninci P."/>
            <person name="Kasukawa T."/>
            <person name="Katayama S."/>
            <person name="Gough J."/>
            <person name="Frith M.C."/>
            <person name="Maeda N."/>
            <person name="Oyama R."/>
            <person name="Ravasi T."/>
            <person name="Lenhard B."/>
            <person name="Wells C."/>
            <person name="Kodzius R."/>
            <person name="Shimokawa K."/>
            <person name="Bajic V.B."/>
            <person name="Brenner S.E."/>
            <person name="Batalov S."/>
            <person name="Forrest A.R."/>
            <person name="Zavolan M."/>
            <person name="Davis M.J."/>
            <person name="Wilming L.G."/>
            <person name="Aidinis V."/>
            <person name="Allen J.E."/>
            <person name="Ambesi-Impiombato A."/>
            <person name="Apweiler R."/>
            <person name="Aturaliya R.N."/>
            <person name="Bailey T.L."/>
            <person name="Bansal M."/>
            <person name="Baxter L."/>
            <person name="Beisel K.W."/>
            <person name="Bersano T."/>
            <person name="Bono H."/>
            <person name="Chalk A.M."/>
            <person name="Chiu K.P."/>
            <person name="Choudhary V."/>
            <person name="Christoffels A."/>
            <person name="Clutterbuck D.R."/>
            <person name="Crowe M.L."/>
            <person name="Dalla E."/>
            <person name="Dalrymple B.P."/>
            <person name="de Bono B."/>
            <person name="Della Gatta G."/>
            <person name="di Bernardo D."/>
            <person name="Down T."/>
            <person name="Engstrom P."/>
            <person name="Fagiolini M."/>
            <person name="Faulkner G."/>
            <person name="Fletcher C.F."/>
            <person name="Fukushima T."/>
            <person name="Furuno M."/>
            <person name="Futaki S."/>
            <person name="Gariboldi M."/>
            <person name="Georgii-Hemming P."/>
            <person name="Gingeras T.R."/>
            <person name="Gojobori T."/>
            <person name="Green R.E."/>
            <person name="Gustincich S."/>
            <person name="Harbers M."/>
            <person name="Hayashi Y."/>
            <person name="Hensch T.K."/>
            <person name="Hirokawa N."/>
            <person name="Hill D."/>
            <person name="Huminiecki L."/>
            <person name="Iacono M."/>
            <person name="Ikeo K."/>
            <person name="Iwama A."/>
            <person name="Ishikawa T."/>
            <person name="Jakt M."/>
            <person name="Kanapin A."/>
            <person name="Katoh M."/>
            <person name="Kawasawa Y."/>
            <person name="Kelso J."/>
            <person name="Kitamura H."/>
            <person name="Kitano H."/>
            <person name="Kollias G."/>
            <person name="Krishnan S.P."/>
            <person name="Kruger A."/>
            <person name="Kummerfeld S.K."/>
            <person name="Kurochkin I.V."/>
            <person name="Lareau L.F."/>
            <person name="Lazarevic D."/>
            <person name="Lipovich L."/>
            <person name="Liu J."/>
            <person name="Liuni S."/>
            <person name="McWilliam S."/>
            <person name="Madan Babu M."/>
            <person name="Madera M."/>
            <person name="Marchionni L."/>
            <person name="Matsuda H."/>
            <person name="Matsuzawa S."/>
            <person name="Miki H."/>
            <person name="Mignone F."/>
            <person name="Miyake S."/>
            <person name="Morris K."/>
            <person name="Mottagui-Tabar S."/>
            <person name="Mulder N."/>
            <person name="Nakano N."/>
            <person name="Nakauchi H."/>
            <person name="Ng P."/>
            <person name="Nilsson R."/>
            <person name="Nishiguchi S."/>
            <person name="Nishikawa S."/>
            <person name="Nori F."/>
            <person name="Ohara O."/>
            <person name="Okazaki Y."/>
            <person name="Orlando V."/>
            <person name="Pang K.C."/>
            <person name="Pavan W.J."/>
            <person name="Pavesi G."/>
            <person name="Pesole G."/>
            <person name="Petrovsky N."/>
            <person name="Piazza S."/>
            <person name="Reed J."/>
            <person name="Reid J.F."/>
            <person name="Ring B.Z."/>
            <person name="Ringwald M."/>
            <person name="Rost B."/>
            <person name="Ruan Y."/>
            <person name="Salzberg S.L."/>
            <person name="Sandelin A."/>
            <person name="Schneider C."/>
            <person name="Schoenbach C."/>
            <person name="Sekiguchi K."/>
            <person name="Semple C.A."/>
            <person name="Seno S."/>
            <person name="Sessa L."/>
            <person name="Sheng Y."/>
            <person name="Shibata Y."/>
            <person name="Shimada H."/>
            <person name="Shimada K."/>
            <person name="Silva D."/>
            <person name="Sinclair B."/>
            <person name="Sperling S."/>
            <person name="Stupka E."/>
            <person name="Sugiura K."/>
            <person name="Sultana R."/>
            <person name="Takenaka Y."/>
            <person name="Taki K."/>
            <person name="Tammoja K."/>
            <person name="Tan S.L."/>
            <person name="Tang S."/>
            <person name="Taylor M.S."/>
            <person name="Tegner J."/>
            <person name="Teichmann S.A."/>
            <person name="Ueda H.R."/>
            <person name="van Nimwegen E."/>
            <person name="Verardo R."/>
            <person name="Wei C.L."/>
            <person name="Yagi K."/>
            <person name="Yamanishi H."/>
            <person name="Zabarovsky E."/>
            <person name="Zhu S."/>
            <person name="Zimmer A."/>
            <person name="Hide W."/>
            <person name="Bult C."/>
            <person name="Grimmond S.M."/>
            <person name="Teasdale R.D."/>
            <person name="Liu E.T."/>
            <person name="Brusic V."/>
            <person name="Quackenbush J."/>
            <person name="Wahlestedt C."/>
            <person name="Mattick J.S."/>
            <person name="Hume D.A."/>
            <person name="Kai C."/>
            <person name="Sasaki D."/>
            <person name="Tomaru Y."/>
            <person name="Fukuda S."/>
            <person name="Kanamori-Katayama M."/>
            <person name="Suzuki M."/>
            <person name="Aoki J."/>
            <person name="Arakawa T."/>
            <person name="Iida J."/>
            <person name="Imamura K."/>
            <person name="Itoh M."/>
            <person name="Kato T."/>
            <person name="Kawaji H."/>
            <person name="Kawagashira N."/>
            <person name="Kawashima T."/>
            <person name="Kojima M."/>
            <person name="Kondo S."/>
            <person name="Konno H."/>
            <person name="Nakano K."/>
            <person name="Ninomiya N."/>
            <person name="Nishio T."/>
            <person name="Okada M."/>
            <person name="Plessy C."/>
            <person name="Shibata K."/>
            <person name="Shiraki T."/>
            <person name="Suzuki S."/>
            <person name="Tagami M."/>
            <person name="Waki K."/>
            <person name="Watahiki A."/>
            <person name="Okamura-Oho Y."/>
            <person name="Suzuki H."/>
            <person name="Kawai J."/>
            <person name="Hayashizaki Y."/>
        </authorList>
    </citation>
    <scope>NUCLEOTIDE SEQUENCE [LARGE SCALE MRNA]</scope>
    <source>
        <strain>C57BL/6J</strain>
        <tissue>Diencephalon</tissue>
    </source>
</reference>
<proteinExistence type="evidence at transcript level"/>
<name>CHIC1_MOUSE</name>
<organism>
    <name type="scientific">Mus musculus</name>
    <name type="common">Mouse</name>
    <dbReference type="NCBI Taxonomy" id="10090"/>
    <lineage>
        <taxon>Eukaryota</taxon>
        <taxon>Metazoa</taxon>
        <taxon>Chordata</taxon>
        <taxon>Craniata</taxon>
        <taxon>Vertebrata</taxon>
        <taxon>Euteleostomi</taxon>
        <taxon>Mammalia</taxon>
        <taxon>Eutheria</taxon>
        <taxon>Euarchontoglires</taxon>
        <taxon>Glires</taxon>
        <taxon>Rodentia</taxon>
        <taxon>Myomorpha</taxon>
        <taxon>Muroidea</taxon>
        <taxon>Muridae</taxon>
        <taxon>Murinae</taxon>
        <taxon>Mus</taxon>
        <taxon>Mus</taxon>
    </lineage>
</organism>
<gene>
    <name type="primary">Chic1</name>
    <name type="synonym">Brx</name>
</gene>
<feature type="chain" id="PRO_0000189555" description="Cysteine-rich hydrophobic domain-containing protein 1">
    <location>
        <begin position="1"/>
        <end position="227"/>
    </location>
</feature>
<feature type="region of interest" description="Disordered" evidence="3">
    <location>
        <begin position="1"/>
        <end position="84"/>
    </location>
</feature>
<feature type="coiled-coil region" evidence="2">
    <location>
        <begin position="46"/>
        <end position="73"/>
    </location>
</feature>
<feature type="compositionally biased region" description="Acidic residues" evidence="3">
    <location>
        <begin position="13"/>
        <end position="23"/>
    </location>
</feature>
<feature type="compositionally biased region" description="Low complexity" evidence="3">
    <location>
        <begin position="24"/>
        <end position="44"/>
    </location>
</feature>
<feature type="compositionally biased region" description="Acidic residues" evidence="3">
    <location>
        <begin position="45"/>
        <end position="72"/>
    </location>
</feature>
<feature type="sequence conflict" description="In Ref. 1; CAA72638." evidence="5" ref="1">
    <original>A</original>
    <variation>V</variation>
    <location>
        <position position="193"/>
    </location>
</feature>
<keyword id="KW-1003">Cell membrane</keyword>
<keyword id="KW-0175">Coiled coil</keyword>
<keyword id="KW-0968">Cytoplasmic vesicle</keyword>
<keyword id="KW-0449">Lipoprotein</keyword>
<keyword id="KW-0472">Membrane</keyword>
<keyword id="KW-0564">Palmitate</keyword>
<keyword id="KW-1185">Reference proteome</keyword>
<comment type="subcellular location">
    <subcellularLocation>
        <location evidence="1">Cell membrane</location>
    </subcellularLocation>
    <subcellularLocation>
        <location evidence="1">Cytoplasmic vesicle</location>
    </subcellularLocation>
    <text evidence="1">Also present at a Golgi-like vesicular compartment and at scattered vesicles.</text>
</comment>
<comment type="tissue specificity">
    <text evidence="4">Expressed moderately in the brain.</text>
</comment>
<comment type="developmental stage">
    <text evidence="4">Detected in the 7, 11, 15, or 19 dpc.</text>
</comment>
<comment type="PTM">
    <text evidence="1">Palmitoylated.</text>
</comment>
<comment type="similarity">
    <text evidence="5">Belongs to the CHIC family.</text>
</comment>
<comment type="caution">
    <text evidence="5">It is uncertain whether Met-1 or Met-8 is the initiator.</text>
</comment>
<comment type="sequence caution" evidence="5">
    <conflict type="frameshift">
        <sequence resource="EMBL-CDS" id="BAC28706"/>
    </conflict>
</comment>
<comment type="sequence caution" evidence="5">
    <conflict type="frameshift">
        <sequence resource="EMBL-CDS" id="CAA72638"/>
    </conflict>
</comment>
<evidence type="ECO:0000250" key="1"/>
<evidence type="ECO:0000255" key="2"/>
<evidence type="ECO:0000256" key="3">
    <source>
        <dbReference type="SAM" id="MobiDB-lite"/>
    </source>
</evidence>
<evidence type="ECO:0000269" key="4">
    <source>
    </source>
</evidence>
<evidence type="ECO:0000305" key="5"/>
<dbReference type="EMBL" id="Y11896">
    <property type="protein sequence ID" value="CAA72638.1"/>
    <property type="status" value="ALT_SEQ"/>
    <property type="molecule type" value="mRNA"/>
</dbReference>
<dbReference type="EMBL" id="AJ421479">
    <property type="protein sequence ID" value="CAD33951.1"/>
    <property type="molecule type" value="Genomic_DNA"/>
</dbReference>
<dbReference type="EMBL" id="AK034427">
    <property type="protein sequence ID" value="BAC28706.1"/>
    <property type="status" value="ALT_FRAME"/>
    <property type="molecule type" value="mRNA"/>
</dbReference>
<dbReference type="CCDS" id="CCDS53165.1"/>
<dbReference type="RefSeq" id="NP_033897.1">
    <property type="nucleotide sequence ID" value="NM_009767.3"/>
</dbReference>
<dbReference type="SMR" id="Q8CBW7"/>
<dbReference type="FunCoup" id="Q8CBW7">
    <property type="interactions" value="354"/>
</dbReference>
<dbReference type="STRING" id="10090.ENSMUSP00000112246"/>
<dbReference type="iPTMnet" id="Q8CBW7"/>
<dbReference type="PhosphoSitePlus" id="Q8CBW7"/>
<dbReference type="PaxDb" id="10090-ENSMUSP00000112246"/>
<dbReference type="ProteomicsDB" id="281463"/>
<dbReference type="Antibodypedia" id="27995">
    <property type="antibodies" value="21 antibodies from 10 providers"/>
</dbReference>
<dbReference type="DNASU" id="12212"/>
<dbReference type="Ensembl" id="ENSMUST00000116547.3">
    <property type="protein sequence ID" value="ENSMUSP00000112246.3"/>
    <property type="gene ID" value="ENSMUSG00000031327.11"/>
</dbReference>
<dbReference type="GeneID" id="12212"/>
<dbReference type="KEGG" id="mmu:12212"/>
<dbReference type="UCSC" id="uc009tzl.2">
    <property type="organism name" value="mouse"/>
</dbReference>
<dbReference type="AGR" id="MGI:1344694"/>
<dbReference type="CTD" id="53344"/>
<dbReference type="MGI" id="MGI:1344694">
    <property type="gene designation" value="Chic1"/>
</dbReference>
<dbReference type="VEuPathDB" id="HostDB:ENSMUSG00000031327"/>
<dbReference type="eggNOG" id="KOG4101">
    <property type="taxonomic scope" value="Eukaryota"/>
</dbReference>
<dbReference type="GeneTree" id="ENSGT00390000003601"/>
<dbReference type="HOGENOM" id="CLU_100628_0_0_1"/>
<dbReference type="InParanoid" id="Q8CBW7"/>
<dbReference type="OMA" id="FCCCSFG"/>
<dbReference type="OrthoDB" id="67682at2759"/>
<dbReference type="PhylomeDB" id="Q8CBW7"/>
<dbReference type="TreeFam" id="TF314908"/>
<dbReference type="BioGRID-ORCS" id="12212">
    <property type="hits" value="2 hits in 78 CRISPR screens"/>
</dbReference>
<dbReference type="ChiTaRS" id="Chic1">
    <property type="organism name" value="mouse"/>
</dbReference>
<dbReference type="PRO" id="PR:Q8CBW7"/>
<dbReference type="Proteomes" id="UP000000589">
    <property type="component" value="Chromosome X"/>
</dbReference>
<dbReference type="RNAct" id="Q8CBW7">
    <property type="molecule type" value="protein"/>
</dbReference>
<dbReference type="Bgee" id="ENSMUSG00000031327">
    <property type="expression patterns" value="Expressed in islet of Langerhans and 203 other cell types or tissues"/>
</dbReference>
<dbReference type="ExpressionAtlas" id="Q8CBW7">
    <property type="expression patterns" value="baseline and differential"/>
</dbReference>
<dbReference type="GO" id="GO:0031410">
    <property type="term" value="C:cytoplasmic vesicle"/>
    <property type="evidence" value="ECO:0007669"/>
    <property type="project" value="UniProtKB-KW"/>
</dbReference>
<dbReference type="GO" id="GO:0005886">
    <property type="term" value="C:plasma membrane"/>
    <property type="evidence" value="ECO:0007669"/>
    <property type="project" value="UniProtKB-SubCell"/>
</dbReference>
<dbReference type="InterPro" id="IPR039735">
    <property type="entry name" value="CHIC1/2"/>
</dbReference>
<dbReference type="InterPro" id="IPR019383">
    <property type="entry name" value="Golgin_A_7/ERF4"/>
</dbReference>
<dbReference type="PANTHER" id="PTHR13005">
    <property type="entry name" value="CYSTEINE-RICH HYDROPHOBIC DOMAIN PROTEIN BRAIN X-LINKED PROTEIN"/>
    <property type="match status" value="1"/>
</dbReference>
<dbReference type="PANTHER" id="PTHR13005:SF2">
    <property type="entry name" value="CYSTEINE-RICH HYDROPHOBIC DOMAIN-CONTAINING PROTEIN 1"/>
    <property type="match status" value="1"/>
</dbReference>
<dbReference type="Pfam" id="PF10256">
    <property type="entry name" value="Erf4"/>
    <property type="match status" value="1"/>
</dbReference>
<protein>
    <recommendedName>
        <fullName>Cysteine-rich hydrophobic domain-containing protein 1</fullName>
    </recommendedName>
    <alternativeName>
        <fullName>Brain X-linked protein</fullName>
    </alternativeName>
</protein>
<accession>Q8CBW7</accession>
<accession>O08904</accession>
<accession>Q8K3S5</accession>